<comment type="similarity">
    <text evidence="1">Belongs to the bacterial ribosomal protein bL34 family.</text>
</comment>
<name>RL34_ACICJ</name>
<feature type="chain" id="PRO_1000013263" description="Large ribosomal subunit protein bL34">
    <location>
        <begin position="1"/>
        <end position="44"/>
    </location>
</feature>
<feature type="region of interest" description="Disordered" evidence="2">
    <location>
        <begin position="1"/>
        <end position="44"/>
    </location>
</feature>
<feature type="compositionally biased region" description="Basic residues" evidence="2">
    <location>
        <begin position="10"/>
        <end position="19"/>
    </location>
</feature>
<feature type="compositionally biased region" description="Basic residues" evidence="2">
    <location>
        <begin position="31"/>
        <end position="44"/>
    </location>
</feature>
<proteinExistence type="inferred from homology"/>
<evidence type="ECO:0000255" key="1">
    <source>
        <dbReference type="HAMAP-Rule" id="MF_00391"/>
    </source>
</evidence>
<evidence type="ECO:0000256" key="2">
    <source>
        <dbReference type="SAM" id="MobiDB-lite"/>
    </source>
</evidence>
<evidence type="ECO:0000305" key="3"/>
<keyword id="KW-1185">Reference proteome</keyword>
<keyword id="KW-0687">Ribonucleoprotein</keyword>
<keyword id="KW-0689">Ribosomal protein</keyword>
<dbReference type="EMBL" id="CP000697">
    <property type="protein sequence ID" value="ABQ31337.1"/>
    <property type="molecule type" value="Genomic_DNA"/>
</dbReference>
<dbReference type="RefSeq" id="WP_007423336.1">
    <property type="nucleotide sequence ID" value="NC_009484.1"/>
</dbReference>
<dbReference type="SMR" id="A5G0F5"/>
<dbReference type="STRING" id="349163.Acry_2138"/>
<dbReference type="KEGG" id="acr:Acry_2138"/>
<dbReference type="eggNOG" id="COG0230">
    <property type="taxonomic scope" value="Bacteria"/>
</dbReference>
<dbReference type="HOGENOM" id="CLU_129938_2_0_5"/>
<dbReference type="Proteomes" id="UP000000245">
    <property type="component" value="Chromosome"/>
</dbReference>
<dbReference type="GO" id="GO:1990904">
    <property type="term" value="C:ribonucleoprotein complex"/>
    <property type="evidence" value="ECO:0007669"/>
    <property type="project" value="UniProtKB-KW"/>
</dbReference>
<dbReference type="GO" id="GO:0005840">
    <property type="term" value="C:ribosome"/>
    <property type="evidence" value="ECO:0007669"/>
    <property type="project" value="UniProtKB-KW"/>
</dbReference>
<dbReference type="GO" id="GO:0003735">
    <property type="term" value="F:structural constituent of ribosome"/>
    <property type="evidence" value="ECO:0007669"/>
    <property type="project" value="InterPro"/>
</dbReference>
<dbReference type="GO" id="GO:0006412">
    <property type="term" value="P:translation"/>
    <property type="evidence" value="ECO:0007669"/>
    <property type="project" value="UniProtKB-UniRule"/>
</dbReference>
<dbReference type="FunFam" id="1.10.287.3980:FF:000001">
    <property type="entry name" value="Mitochondrial ribosomal protein L34"/>
    <property type="match status" value="1"/>
</dbReference>
<dbReference type="Gene3D" id="1.10.287.3980">
    <property type="match status" value="1"/>
</dbReference>
<dbReference type="HAMAP" id="MF_00391">
    <property type="entry name" value="Ribosomal_bL34"/>
    <property type="match status" value="1"/>
</dbReference>
<dbReference type="InterPro" id="IPR000271">
    <property type="entry name" value="Ribosomal_bL34"/>
</dbReference>
<dbReference type="InterPro" id="IPR020939">
    <property type="entry name" value="Ribosomal_bL34_CS"/>
</dbReference>
<dbReference type="NCBIfam" id="TIGR01030">
    <property type="entry name" value="rpmH_bact"/>
    <property type="match status" value="1"/>
</dbReference>
<dbReference type="PANTHER" id="PTHR14503:SF4">
    <property type="entry name" value="LARGE RIBOSOMAL SUBUNIT PROTEIN BL34M"/>
    <property type="match status" value="1"/>
</dbReference>
<dbReference type="PANTHER" id="PTHR14503">
    <property type="entry name" value="MITOCHONDRIAL RIBOSOMAL PROTEIN 34 FAMILY MEMBER"/>
    <property type="match status" value="1"/>
</dbReference>
<dbReference type="Pfam" id="PF00468">
    <property type="entry name" value="Ribosomal_L34"/>
    <property type="match status" value="1"/>
</dbReference>
<dbReference type="PROSITE" id="PS00784">
    <property type="entry name" value="RIBOSOMAL_L34"/>
    <property type="match status" value="1"/>
</dbReference>
<protein>
    <recommendedName>
        <fullName evidence="1">Large ribosomal subunit protein bL34</fullName>
    </recommendedName>
    <alternativeName>
        <fullName evidence="3">50S ribosomal protein L34</fullName>
    </alternativeName>
</protein>
<organism>
    <name type="scientific">Acidiphilium cryptum (strain JF-5)</name>
    <dbReference type="NCBI Taxonomy" id="349163"/>
    <lineage>
        <taxon>Bacteria</taxon>
        <taxon>Pseudomonadati</taxon>
        <taxon>Pseudomonadota</taxon>
        <taxon>Alphaproteobacteria</taxon>
        <taxon>Acetobacterales</taxon>
        <taxon>Acidocellaceae</taxon>
        <taxon>Acidiphilium</taxon>
    </lineage>
</organism>
<sequence length="44" mass="5198">MKRTYQPSKLVRKRRHGFRSRMETVGGRKVLASRRAKGRKRLSA</sequence>
<reference key="1">
    <citation type="submission" date="2007-05" db="EMBL/GenBank/DDBJ databases">
        <title>Complete sequence of chromosome of Acidiphilium cryptum JF-5.</title>
        <authorList>
            <consortium name="US DOE Joint Genome Institute"/>
            <person name="Copeland A."/>
            <person name="Lucas S."/>
            <person name="Lapidus A."/>
            <person name="Barry K."/>
            <person name="Detter J.C."/>
            <person name="Glavina del Rio T."/>
            <person name="Hammon N."/>
            <person name="Israni S."/>
            <person name="Dalin E."/>
            <person name="Tice H."/>
            <person name="Pitluck S."/>
            <person name="Sims D."/>
            <person name="Brettin T."/>
            <person name="Bruce D."/>
            <person name="Han C."/>
            <person name="Schmutz J."/>
            <person name="Larimer F."/>
            <person name="Land M."/>
            <person name="Hauser L."/>
            <person name="Kyrpides N."/>
            <person name="Kim E."/>
            <person name="Magnuson T."/>
            <person name="Richardson P."/>
        </authorList>
    </citation>
    <scope>NUCLEOTIDE SEQUENCE [LARGE SCALE GENOMIC DNA]</scope>
    <source>
        <strain>JF-5</strain>
    </source>
</reference>
<accession>A5G0F5</accession>
<gene>
    <name evidence="1" type="primary">rpmH</name>
    <name type="ordered locus">Acry_2138</name>
</gene>